<name>ISL1_CHICK</name>
<organism>
    <name type="scientific">Gallus gallus</name>
    <name type="common">Chicken</name>
    <dbReference type="NCBI Taxonomy" id="9031"/>
    <lineage>
        <taxon>Eukaryota</taxon>
        <taxon>Metazoa</taxon>
        <taxon>Chordata</taxon>
        <taxon>Craniata</taxon>
        <taxon>Vertebrata</taxon>
        <taxon>Euteleostomi</taxon>
        <taxon>Archelosauria</taxon>
        <taxon>Archosauria</taxon>
        <taxon>Dinosauria</taxon>
        <taxon>Saurischia</taxon>
        <taxon>Theropoda</taxon>
        <taxon>Coelurosauria</taxon>
        <taxon>Aves</taxon>
        <taxon>Neognathae</taxon>
        <taxon>Galloanserae</taxon>
        <taxon>Galliformes</taxon>
        <taxon>Phasianidae</taxon>
        <taxon>Phasianinae</taxon>
        <taxon>Gallus</taxon>
    </lineage>
</organism>
<feature type="chain" id="PRO_0000075750" description="Insulin gene enhancer protein ISL-1">
    <location>
        <begin position="1"/>
        <end position="349"/>
    </location>
</feature>
<feature type="domain" description="LIM zinc-binding 1" evidence="4">
    <location>
        <begin position="17"/>
        <end position="70"/>
    </location>
</feature>
<feature type="domain" description="LIM zinc-binding 2" evidence="4">
    <location>
        <begin position="79"/>
        <end position="133"/>
    </location>
</feature>
<feature type="DNA-binding region" description="Homeobox" evidence="3">
    <location>
        <begin position="181"/>
        <end position="240"/>
    </location>
</feature>
<feature type="region of interest" description="Disordered" evidence="5">
    <location>
        <begin position="312"/>
        <end position="349"/>
    </location>
</feature>
<feature type="compositionally biased region" description="Polar residues" evidence="5">
    <location>
        <begin position="321"/>
        <end position="343"/>
    </location>
</feature>
<dbReference type="EMBL" id="L35567">
    <property type="protein sequence ID" value="AAA62171.1"/>
    <property type="molecule type" value="mRNA"/>
</dbReference>
<dbReference type="PIR" id="I50369">
    <property type="entry name" value="I50369"/>
</dbReference>
<dbReference type="RefSeq" id="NP_990745.1">
    <property type="nucleotide sequence ID" value="NM_205414.2"/>
</dbReference>
<dbReference type="BMRB" id="P50211"/>
<dbReference type="SMR" id="P50211"/>
<dbReference type="FunCoup" id="P50211">
    <property type="interactions" value="26"/>
</dbReference>
<dbReference type="STRING" id="9031.ENSGALP00000043151"/>
<dbReference type="PaxDb" id="9031-ENSGALP00000043151"/>
<dbReference type="Ensembl" id="ENSGALT00010035229.1">
    <property type="protein sequence ID" value="ENSGALP00010020530.1"/>
    <property type="gene ID" value="ENSGALG00010014672.1"/>
</dbReference>
<dbReference type="GeneID" id="396383"/>
<dbReference type="KEGG" id="gga:396383"/>
<dbReference type="CTD" id="3670"/>
<dbReference type="VEuPathDB" id="HostDB:geneid_396383"/>
<dbReference type="eggNOG" id="KOG0490">
    <property type="taxonomic scope" value="Eukaryota"/>
</dbReference>
<dbReference type="GeneTree" id="ENSGT00940000153731"/>
<dbReference type="HOGENOM" id="CLU_027802_2_0_1"/>
<dbReference type="InParanoid" id="P50211"/>
<dbReference type="OMA" id="SPMHGNR"/>
<dbReference type="OrthoDB" id="125004at2759"/>
<dbReference type="PhylomeDB" id="P50211"/>
<dbReference type="PRO" id="PR:P50211"/>
<dbReference type="Proteomes" id="UP000000539">
    <property type="component" value="Chromosome Z"/>
</dbReference>
<dbReference type="Bgee" id="ENSGALG00000014884">
    <property type="expression patterns" value="Expressed in brain"/>
</dbReference>
<dbReference type="GO" id="GO:0000785">
    <property type="term" value="C:chromatin"/>
    <property type="evidence" value="ECO:0007669"/>
    <property type="project" value="Ensembl"/>
</dbReference>
<dbReference type="GO" id="GO:0005634">
    <property type="term" value="C:nucleus"/>
    <property type="evidence" value="ECO:0000314"/>
    <property type="project" value="AgBase"/>
</dbReference>
<dbReference type="GO" id="GO:0043425">
    <property type="term" value="F:bHLH transcription factor binding"/>
    <property type="evidence" value="ECO:0007669"/>
    <property type="project" value="Ensembl"/>
</dbReference>
<dbReference type="GO" id="GO:0000987">
    <property type="term" value="F:cis-regulatory region sequence-specific DNA binding"/>
    <property type="evidence" value="ECO:0000318"/>
    <property type="project" value="GO_Central"/>
</dbReference>
<dbReference type="GO" id="GO:0001228">
    <property type="term" value="F:DNA-binding transcription activator activity, RNA polymerase II-specific"/>
    <property type="evidence" value="ECO:0007669"/>
    <property type="project" value="Ensembl"/>
</dbReference>
<dbReference type="GO" id="GO:0000981">
    <property type="term" value="F:DNA-binding transcription factor activity, RNA polymerase II-specific"/>
    <property type="evidence" value="ECO:0000318"/>
    <property type="project" value="GO_Central"/>
</dbReference>
<dbReference type="GO" id="GO:0046872">
    <property type="term" value="F:metal ion binding"/>
    <property type="evidence" value="ECO:0007669"/>
    <property type="project" value="UniProtKB-KW"/>
</dbReference>
<dbReference type="GO" id="GO:1990841">
    <property type="term" value="F:promoter-specific chromatin binding"/>
    <property type="evidence" value="ECO:0007669"/>
    <property type="project" value="Ensembl"/>
</dbReference>
<dbReference type="GO" id="GO:0000978">
    <property type="term" value="F:RNA polymerase II cis-regulatory region sequence-specific DNA binding"/>
    <property type="evidence" value="ECO:0007669"/>
    <property type="project" value="Ensembl"/>
</dbReference>
<dbReference type="GO" id="GO:0061629">
    <property type="term" value="F:RNA polymerase II-specific DNA-binding transcription factor binding"/>
    <property type="evidence" value="ECO:0007669"/>
    <property type="project" value="Ensembl"/>
</dbReference>
<dbReference type="GO" id="GO:0060413">
    <property type="term" value="P:atrial septum morphogenesis"/>
    <property type="evidence" value="ECO:0007669"/>
    <property type="project" value="Ensembl"/>
</dbReference>
<dbReference type="GO" id="GO:0007409">
    <property type="term" value="P:axonogenesis"/>
    <property type="evidence" value="ECO:0000318"/>
    <property type="project" value="GO_Central"/>
</dbReference>
<dbReference type="GO" id="GO:0060070">
    <property type="term" value="P:canonical Wnt signaling pathway"/>
    <property type="evidence" value="ECO:0007669"/>
    <property type="project" value="Ensembl"/>
</dbReference>
<dbReference type="GO" id="GO:0060913">
    <property type="term" value="P:cardiac cell fate determination"/>
    <property type="evidence" value="ECO:0007669"/>
    <property type="project" value="Ensembl"/>
</dbReference>
<dbReference type="GO" id="GO:0060379">
    <property type="term" value="P:cardiac muscle cell myoblast differentiation"/>
    <property type="evidence" value="ECO:0007669"/>
    <property type="project" value="Ensembl"/>
</dbReference>
<dbReference type="GO" id="GO:0003215">
    <property type="term" value="P:cardiac right ventricle morphogenesis"/>
    <property type="evidence" value="ECO:0007669"/>
    <property type="project" value="Ensembl"/>
</dbReference>
<dbReference type="GO" id="GO:0008283">
    <property type="term" value="P:cell population proliferation"/>
    <property type="evidence" value="ECO:0007669"/>
    <property type="project" value="Ensembl"/>
</dbReference>
<dbReference type="GO" id="GO:0003203">
    <property type="term" value="P:endocardial cushion morphogenesis"/>
    <property type="evidence" value="ECO:0007669"/>
    <property type="project" value="Ensembl"/>
</dbReference>
<dbReference type="GO" id="GO:0007507">
    <property type="term" value="P:heart development"/>
    <property type="evidence" value="ECO:0000250"/>
    <property type="project" value="UniProtKB"/>
</dbReference>
<dbReference type="GO" id="GO:0060384">
    <property type="term" value="P:innervation"/>
    <property type="evidence" value="ECO:0007669"/>
    <property type="project" value="Ensembl"/>
</dbReference>
<dbReference type="GO" id="GO:0090090">
    <property type="term" value="P:negative regulation of canonical Wnt signaling pathway"/>
    <property type="evidence" value="ECO:0007669"/>
    <property type="project" value="Ensembl"/>
</dbReference>
<dbReference type="GO" id="GO:0045892">
    <property type="term" value="P:negative regulation of DNA-templated transcription"/>
    <property type="evidence" value="ECO:0000314"/>
    <property type="project" value="UniProtKB"/>
</dbReference>
<dbReference type="GO" id="GO:0050728">
    <property type="term" value="P:negative regulation of inflammatory response"/>
    <property type="evidence" value="ECO:0007669"/>
    <property type="project" value="Ensembl"/>
</dbReference>
<dbReference type="GO" id="GO:0043524">
    <property type="term" value="P:negative regulation of neuron apoptotic process"/>
    <property type="evidence" value="ECO:0007669"/>
    <property type="project" value="Ensembl"/>
</dbReference>
<dbReference type="GO" id="GO:0045665">
    <property type="term" value="P:negative regulation of neuron differentiation"/>
    <property type="evidence" value="ECO:0007669"/>
    <property type="project" value="Ensembl"/>
</dbReference>
<dbReference type="GO" id="GO:0000122">
    <property type="term" value="P:negative regulation of transcription by RNA polymerase II"/>
    <property type="evidence" value="ECO:0007669"/>
    <property type="project" value="Ensembl"/>
</dbReference>
<dbReference type="GO" id="GO:0001755">
    <property type="term" value="P:neural crest cell migration"/>
    <property type="evidence" value="ECO:0007669"/>
    <property type="project" value="Ensembl"/>
</dbReference>
<dbReference type="GO" id="GO:0048665">
    <property type="term" value="P:neuron fate specification"/>
    <property type="evidence" value="ECO:0000318"/>
    <property type="project" value="GO_Central"/>
</dbReference>
<dbReference type="GO" id="GO:0003148">
    <property type="term" value="P:outflow tract septum morphogenesis"/>
    <property type="evidence" value="ECO:0007669"/>
    <property type="project" value="Ensembl"/>
</dbReference>
<dbReference type="GO" id="GO:0031016">
    <property type="term" value="P:pancreas development"/>
    <property type="evidence" value="ECO:0007669"/>
    <property type="project" value="Ensembl"/>
</dbReference>
<dbReference type="GO" id="GO:0048936">
    <property type="term" value="P:peripheral nervous system neuron axonogenesis"/>
    <property type="evidence" value="ECO:0007669"/>
    <property type="project" value="Ensembl"/>
</dbReference>
<dbReference type="GO" id="GO:0060037">
    <property type="term" value="P:pharyngeal system development"/>
    <property type="evidence" value="ECO:0007669"/>
    <property type="project" value="Ensembl"/>
</dbReference>
<dbReference type="GO" id="GO:0021983">
    <property type="term" value="P:pituitary gland development"/>
    <property type="evidence" value="ECO:0007669"/>
    <property type="project" value="Ensembl"/>
</dbReference>
<dbReference type="GO" id="GO:0045766">
    <property type="term" value="P:positive regulation of angiogenesis"/>
    <property type="evidence" value="ECO:0007669"/>
    <property type="project" value="Ensembl"/>
</dbReference>
<dbReference type="GO" id="GO:0045597">
    <property type="term" value="P:positive regulation of cell differentiation"/>
    <property type="evidence" value="ECO:0007669"/>
    <property type="project" value="Ensembl"/>
</dbReference>
<dbReference type="GO" id="GO:0008284">
    <property type="term" value="P:positive regulation of cell population proliferation"/>
    <property type="evidence" value="ECO:0007669"/>
    <property type="project" value="Ensembl"/>
</dbReference>
<dbReference type="GO" id="GO:0071657">
    <property type="term" value="P:positive regulation of granulocyte colony-stimulating factor production"/>
    <property type="evidence" value="ECO:0007669"/>
    <property type="project" value="Ensembl"/>
</dbReference>
<dbReference type="GO" id="GO:0032725">
    <property type="term" value="P:positive regulation of granulocyte macrophage colony-stimulating factor production"/>
    <property type="evidence" value="ECO:0007669"/>
    <property type="project" value="Ensembl"/>
</dbReference>
<dbReference type="GO" id="GO:0032024">
    <property type="term" value="P:positive regulation of insulin secretion"/>
    <property type="evidence" value="ECO:0007669"/>
    <property type="project" value="Ensembl"/>
</dbReference>
<dbReference type="GO" id="GO:0032730">
    <property type="term" value="P:positive regulation of interleukin-1 alpha production"/>
    <property type="evidence" value="ECO:0007669"/>
    <property type="project" value="Ensembl"/>
</dbReference>
<dbReference type="GO" id="GO:0032731">
    <property type="term" value="P:positive regulation of interleukin-1 beta production"/>
    <property type="evidence" value="ECO:0007669"/>
    <property type="project" value="Ensembl"/>
</dbReference>
<dbReference type="GO" id="GO:0032735">
    <property type="term" value="P:positive regulation of interleukin-12 production"/>
    <property type="evidence" value="ECO:0007669"/>
    <property type="project" value="Ensembl"/>
</dbReference>
<dbReference type="GO" id="GO:0032755">
    <property type="term" value="P:positive regulation of interleukin-6 production"/>
    <property type="evidence" value="ECO:0007669"/>
    <property type="project" value="Ensembl"/>
</dbReference>
<dbReference type="GO" id="GO:0045944">
    <property type="term" value="P:positive regulation of transcription by RNA polymerase II"/>
    <property type="evidence" value="ECO:0000250"/>
    <property type="project" value="UniProtKB"/>
</dbReference>
<dbReference type="GO" id="GO:0032760">
    <property type="term" value="P:positive regulation of tumor necrosis factor production"/>
    <property type="evidence" value="ECO:0007669"/>
    <property type="project" value="Ensembl"/>
</dbReference>
<dbReference type="GO" id="GO:0032729">
    <property type="term" value="P:positive regulation of type II interferon production"/>
    <property type="evidence" value="ECO:0007669"/>
    <property type="project" value="Ensembl"/>
</dbReference>
<dbReference type="GO" id="GO:0010575">
    <property type="term" value="P:positive regulation of vascular endothelial growth factor production"/>
    <property type="evidence" value="ECO:0007669"/>
    <property type="project" value="Ensembl"/>
</dbReference>
<dbReference type="GO" id="GO:0086091">
    <property type="term" value="P:regulation of heart rate by cardiac conduction"/>
    <property type="evidence" value="ECO:0007669"/>
    <property type="project" value="Ensembl"/>
</dbReference>
<dbReference type="GO" id="GO:0003266">
    <property type="term" value="P:regulation of secondary heart field cardioblast proliferation"/>
    <property type="evidence" value="ECO:0007669"/>
    <property type="project" value="Ensembl"/>
</dbReference>
<dbReference type="GO" id="GO:0031290">
    <property type="term" value="P:retinal ganglion cell axon guidance"/>
    <property type="evidence" value="ECO:0007669"/>
    <property type="project" value="Ensembl"/>
</dbReference>
<dbReference type="GO" id="GO:0003139">
    <property type="term" value="P:secondary heart field specification"/>
    <property type="evidence" value="ECO:0007669"/>
    <property type="project" value="Ensembl"/>
</dbReference>
<dbReference type="GO" id="GO:0048880">
    <property type="term" value="P:sensory system development"/>
    <property type="evidence" value="ECO:0007669"/>
    <property type="project" value="Ensembl"/>
</dbReference>
<dbReference type="GO" id="GO:0060931">
    <property type="term" value="P:sinoatrial node cell development"/>
    <property type="evidence" value="ECO:0007669"/>
    <property type="project" value="Ensembl"/>
</dbReference>
<dbReference type="GO" id="GO:0021520">
    <property type="term" value="P:spinal cord motor neuron cell fate specification"/>
    <property type="evidence" value="ECO:0007669"/>
    <property type="project" value="Ensembl"/>
</dbReference>
<dbReference type="GO" id="GO:0006366">
    <property type="term" value="P:transcription by RNA polymerase II"/>
    <property type="evidence" value="ECO:0007669"/>
    <property type="project" value="Ensembl"/>
</dbReference>
<dbReference type="GO" id="GO:0021559">
    <property type="term" value="P:trigeminal nerve development"/>
    <property type="evidence" value="ECO:0007669"/>
    <property type="project" value="Ensembl"/>
</dbReference>
<dbReference type="GO" id="GO:0055010">
    <property type="term" value="P:ventricular cardiac muscle tissue morphogenesis"/>
    <property type="evidence" value="ECO:0007669"/>
    <property type="project" value="Ensembl"/>
</dbReference>
<dbReference type="GO" id="GO:0021524">
    <property type="term" value="P:visceral motor neuron differentiation"/>
    <property type="evidence" value="ECO:0007669"/>
    <property type="project" value="Ensembl"/>
</dbReference>
<dbReference type="CDD" id="cd00086">
    <property type="entry name" value="homeodomain"/>
    <property type="match status" value="1"/>
</dbReference>
<dbReference type="CDD" id="cd09366">
    <property type="entry name" value="LIM1_Isl"/>
    <property type="match status" value="1"/>
</dbReference>
<dbReference type="CDD" id="cd09374">
    <property type="entry name" value="LIM2_Isl"/>
    <property type="match status" value="1"/>
</dbReference>
<dbReference type="FunFam" id="2.10.110.10:FF:000034">
    <property type="entry name" value="Insulin gene enhancer protein ISL"/>
    <property type="match status" value="1"/>
</dbReference>
<dbReference type="FunFam" id="1.10.10.60:FF:000041">
    <property type="entry name" value="insulin gene enhancer protein ISL-1"/>
    <property type="match status" value="1"/>
</dbReference>
<dbReference type="FunFam" id="2.10.110.10:FF:000056">
    <property type="entry name" value="insulin gene enhancer protein ISL-1"/>
    <property type="match status" value="1"/>
</dbReference>
<dbReference type="Gene3D" id="2.10.110.10">
    <property type="entry name" value="Cysteine Rich Protein"/>
    <property type="match status" value="2"/>
</dbReference>
<dbReference type="Gene3D" id="1.10.10.60">
    <property type="entry name" value="Homeodomain-like"/>
    <property type="match status" value="1"/>
</dbReference>
<dbReference type="InterPro" id="IPR001356">
    <property type="entry name" value="HD"/>
</dbReference>
<dbReference type="InterPro" id="IPR017970">
    <property type="entry name" value="Homeobox_CS"/>
</dbReference>
<dbReference type="InterPro" id="IPR009057">
    <property type="entry name" value="Homeodomain-like_sf"/>
</dbReference>
<dbReference type="InterPro" id="IPR047169">
    <property type="entry name" value="ISL1/2-like"/>
</dbReference>
<dbReference type="InterPro" id="IPR047244">
    <property type="entry name" value="ISL1/2-like_LIM1"/>
</dbReference>
<dbReference type="InterPro" id="IPR001781">
    <property type="entry name" value="Znf_LIM"/>
</dbReference>
<dbReference type="PANTHER" id="PTHR24204">
    <property type="entry name" value="INSULIN GENE ENHANCER PROTEIN"/>
    <property type="match status" value="1"/>
</dbReference>
<dbReference type="PANTHER" id="PTHR24204:SF4">
    <property type="entry name" value="INSULIN GENE ENHANCER PROTEIN ISL-1"/>
    <property type="match status" value="1"/>
</dbReference>
<dbReference type="Pfam" id="PF00046">
    <property type="entry name" value="Homeodomain"/>
    <property type="match status" value="1"/>
</dbReference>
<dbReference type="Pfam" id="PF00412">
    <property type="entry name" value="LIM"/>
    <property type="match status" value="2"/>
</dbReference>
<dbReference type="SMART" id="SM00389">
    <property type="entry name" value="HOX"/>
    <property type="match status" value="1"/>
</dbReference>
<dbReference type="SMART" id="SM00132">
    <property type="entry name" value="LIM"/>
    <property type="match status" value="2"/>
</dbReference>
<dbReference type="SUPFAM" id="SSF57716">
    <property type="entry name" value="Glucocorticoid receptor-like (DNA-binding domain)"/>
    <property type="match status" value="2"/>
</dbReference>
<dbReference type="SUPFAM" id="SSF46689">
    <property type="entry name" value="Homeodomain-like"/>
    <property type="match status" value="1"/>
</dbReference>
<dbReference type="PROSITE" id="PS00027">
    <property type="entry name" value="HOMEOBOX_1"/>
    <property type="match status" value="1"/>
</dbReference>
<dbReference type="PROSITE" id="PS50071">
    <property type="entry name" value="HOMEOBOX_2"/>
    <property type="match status" value="1"/>
</dbReference>
<dbReference type="PROSITE" id="PS00478">
    <property type="entry name" value="LIM_DOMAIN_1"/>
    <property type="match status" value="2"/>
</dbReference>
<dbReference type="PROSITE" id="PS50023">
    <property type="entry name" value="LIM_DOMAIN_2"/>
    <property type="match status" value="2"/>
</dbReference>
<accession>P50211</accession>
<reference key="1">
    <citation type="journal article" date="1994" name="Cell">
        <title>Topographic organization of embryonic motor neurons defined by expression of LIM homeobox genes.</title>
        <authorList>
            <person name="Tsuchida T."/>
            <person name="Ensini M."/>
            <person name="Morton S.B."/>
            <person name="Baldassare M."/>
            <person name="Edlund T."/>
            <person name="Jessell T.M."/>
            <person name="Pfaff S.L."/>
        </authorList>
    </citation>
    <scope>NUCLEOTIDE SEQUENCE [MRNA]</scope>
    <scope>FUNCTION</scope>
    <scope>DEVELOPMENTAL STAGE</scope>
    <source>
        <tissue>Spinal cord</tissue>
    </source>
</reference>
<comment type="function">
    <text evidence="1 2 6">Acts as a transcriptional regulator (PubMed:7528105). Recognizes and binds to the consensus octamer binding site 5'-ATAATTAA-3' in promoter of target genes. Plays a fundamental role in the gene regulatory network essential for retinal ganglion cell (RGC) differentiation. Binds to insulin gene enhancer sequences (By similarity). Defines subclasses of motoneurons that segregate into columns in the spinal cord and select distinct axon pathways (PubMed:7528105). Acts in conjunction with LHX1, LHX3 and ISL2 (PubMed:7528105). Binds to insulin gene enhancer sequences (By similarity). Essential for heart development (By similarity).</text>
</comment>
<comment type="subcellular location">
    <subcellularLocation>
        <location evidence="1">Nucleus</location>
    </subcellularLocation>
</comment>
<comment type="developmental stage">
    <text evidence="6">Expressed in motor neurons between stages 34 and 35 (at protein level). Expressed prior to the formation of distinct motor axon pathways and before the segregation of motor neurons into columns. Expressed throughout the median motor column and the medial subdivision of the lateral motor column (LMCm).</text>
</comment>
<gene>
    <name type="primary">ISL1</name>
    <name type="synonym">ISL-1</name>
</gene>
<evidence type="ECO:0000250" key="1">
    <source>
        <dbReference type="UniProtKB" id="P61372"/>
    </source>
</evidence>
<evidence type="ECO:0000250" key="2">
    <source>
        <dbReference type="UniProtKB" id="P61374"/>
    </source>
</evidence>
<evidence type="ECO:0000255" key="3">
    <source>
        <dbReference type="PROSITE-ProRule" id="PRU00108"/>
    </source>
</evidence>
<evidence type="ECO:0000255" key="4">
    <source>
        <dbReference type="PROSITE-ProRule" id="PRU00125"/>
    </source>
</evidence>
<evidence type="ECO:0000256" key="5">
    <source>
        <dbReference type="SAM" id="MobiDB-lite"/>
    </source>
</evidence>
<evidence type="ECO:0000269" key="6">
    <source>
    </source>
</evidence>
<evidence type="ECO:0000303" key="7">
    <source>
    </source>
</evidence>
<proteinExistence type="evidence at protein level"/>
<protein>
    <recommendedName>
        <fullName>Insulin gene enhancer protein ISL-1</fullName>
        <shortName evidence="7">Islet-1</shortName>
    </recommendedName>
</protein>
<sequence>MGDMGDPPKKKRLISLCVGCGNQIHDQYILRVSPDLEWHAACLKCAECNQYLDETCTCFVRDGKTYCKRDYIRLYGIKCAKCSIGFSKNDFVMRARAKVYHIECFRCVACSRQLIPGDEFALREDGLFCRADHDVVERASLGAGDPLSPLHPARPLQMAAEPISARQPALRPHVHKQPEKTTRVRTVLNEKQLHTLRTCYAANPRPDALMKEQLVEMTGLSPRVIRVWFQNKRCKDKKRSIMMKQLQQQQPNDKTNIQGMTGTPMVAASPERHDGGLQANPVEVQSYQPPWKVLSDFALQSDIDQPAFQQLVNFSEGGPGSNSTGSEVASMSSQLPDTPNSMVASPIEA</sequence>
<keyword id="KW-0010">Activator</keyword>
<keyword id="KW-0217">Developmental protein</keyword>
<keyword id="KW-0221">Differentiation</keyword>
<keyword id="KW-0238">DNA-binding</keyword>
<keyword id="KW-0371">Homeobox</keyword>
<keyword id="KW-0440">LIM domain</keyword>
<keyword id="KW-0479">Metal-binding</keyword>
<keyword id="KW-0539">Nucleus</keyword>
<keyword id="KW-1185">Reference proteome</keyword>
<keyword id="KW-0677">Repeat</keyword>
<keyword id="KW-0804">Transcription</keyword>
<keyword id="KW-0805">Transcription regulation</keyword>
<keyword id="KW-0862">Zinc</keyword>